<sequence length="116" mass="13250">MQNIPPQVQAMLGQLEGYQQQLQLVIQQKQKVQLELTEAKKALEEIEKVEEGTVIYKTVGTLIVKTDKAKALEELKEKVETLEVRLNALERQEKKLNEKLKELTQKIQTALRPTAG</sequence>
<proteinExistence type="inferred from homology"/>
<name>PFDB_THEON</name>
<protein>
    <recommendedName>
        <fullName evidence="1">Prefoldin subunit beta</fullName>
    </recommendedName>
    <alternativeName>
        <fullName evidence="1">GimC subunit beta</fullName>
    </alternativeName>
</protein>
<dbReference type="EMBL" id="CP000855">
    <property type="protein sequence ID" value="ACJ15936.1"/>
    <property type="molecule type" value="Genomic_DNA"/>
</dbReference>
<dbReference type="RefSeq" id="WP_012571408.1">
    <property type="nucleotide sequence ID" value="NC_011529.1"/>
</dbReference>
<dbReference type="SMR" id="B6YTZ4"/>
<dbReference type="STRING" id="523850.TON_0451"/>
<dbReference type="GeneID" id="7016746"/>
<dbReference type="KEGG" id="ton:TON_0451"/>
<dbReference type="PATRIC" id="fig|523850.10.peg.453"/>
<dbReference type="eggNOG" id="arCOG01342">
    <property type="taxonomic scope" value="Archaea"/>
</dbReference>
<dbReference type="HOGENOM" id="CLU_131909_1_1_2"/>
<dbReference type="Proteomes" id="UP000002727">
    <property type="component" value="Chromosome"/>
</dbReference>
<dbReference type="GO" id="GO:0005737">
    <property type="term" value="C:cytoplasm"/>
    <property type="evidence" value="ECO:0007669"/>
    <property type="project" value="UniProtKB-SubCell"/>
</dbReference>
<dbReference type="GO" id="GO:0016272">
    <property type="term" value="C:prefoldin complex"/>
    <property type="evidence" value="ECO:0007669"/>
    <property type="project" value="UniProtKB-UniRule"/>
</dbReference>
<dbReference type="GO" id="GO:0044183">
    <property type="term" value="F:protein folding chaperone"/>
    <property type="evidence" value="ECO:0007669"/>
    <property type="project" value="TreeGrafter"/>
</dbReference>
<dbReference type="GO" id="GO:0051082">
    <property type="term" value="F:unfolded protein binding"/>
    <property type="evidence" value="ECO:0007669"/>
    <property type="project" value="UniProtKB-UniRule"/>
</dbReference>
<dbReference type="CDD" id="cd23162">
    <property type="entry name" value="Prefoldin_beta_GimC"/>
    <property type="match status" value="1"/>
</dbReference>
<dbReference type="Gene3D" id="1.10.287.370">
    <property type="match status" value="1"/>
</dbReference>
<dbReference type="HAMAP" id="MF_00307">
    <property type="entry name" value="PfdB"/>
    <property type="match status" value="1"/>
</dbReference>
<dbReference type="InterPro" id="IPR002777">
    <property type="entry name" value="PFD_beta-like"/>
</dbReference>
<dbReference type="InterPro" id="IPR012713">
    <property type="entry name" value="PfdB"/>
</dbReference>
<dbReference type="InterPro" id="IPR009053">
    <property type="entry name" value="Prefoldin"/>
</dbReference>
<dbReference type="NCBIfam" id="TIGR02338">
    <property type="entry name" value="gimC_beta"/>
    <property type="match status" value="1"/>
</dbReference>
<dbReference type="PANTHER" id="PTHR20903:SF0">
    <property type="entry name" value="PREFOLDIN SUBUNIT 1"/>
    <property type="match status" value="1"/>
</dbReference>
<dbReference type="PANTHER" id="PTHR20903">
    <property type="entry name" value="PREFOLDIN SUBUNIT 1-RELATED"/>
    <property type="match status" value="1"/>
</dbReference>
<dbReference type="Pfam" id="PF01920">
    <property type="entry name" value="Prefoldin_2"/>
    <property type="match status" value="1"/>
</dbReference>
<dbReference type="SUPFAM" id="SSF46579">
    <property type="entry name" value="Prefoldin"/>
    <property type="match status" value="1"/>
</dbReference>
<feature type="chain" id="PRO_1000115625" description="Prefoldin subunit beta">
    <location>
        <begin position="1"/>
        <end position="116"/>
    </location>
</feature>
<reference key="1">
    <citation type="journal article" date="2008" name="J. Bacteriol.">
        <title>The complete genome sequence of Thermococcus onnurineus NA1 reveals a mixed heterotrophic and carboxydotrophic metabolism.</title>
        <authorList>
            <person name="Lee H.S."/>
            <person name="Kang S.G."/>
            <person name="Bae S.S."/>
            <person name="Lim J.K."/>
            <person name="Cho Y."/>
            <person name="Kim Y.J."/>
            <person name="Jeon J.H."/>
            <person name="Cha S.-S."/>
            <person name="Kwon K.K."/>
            <person name="Kim H.-T."/>
            <person name="Park C.-J."/>
            <person name="Lee H.-W."/>
            <person name="Kim S.I."/>
            <person name="Chun J."/>
            <person name="Colwell R.R."/>
            <person name="Kim S.-J."/>
            <person name="Lee J.-H."/>
        </authorList>
    </citation>
    <scope>NUCLEOTIDE SEQUENCE [LARGE SCALE GENOMIC DNA]</scope>
    <source>
        <strain>NA1</strain>
    </source>
</reference>
<evidence type="ECO:0000255" key="1">
    <source>
        <dbReference type="HAMAP-Rule" id="MF_00307"/>
    </source>
</evidence>
<comment type="function">
    <text evidence="1">Molecular chaperone capable of stabilizing a range of proteins. Seems to fulfill an ATP-independent, HSP70-like function in archaeal de novo protein folding.</text>
</comment>
<comment type="subunit">
    <text evidence="1">Heterohexamer of two alpha and four beta subunits.</text>
</comment>
<comment type="subcellular location">
    <subcellularLocation>
        <location evidence="1">Cytoplasm</location>
    </subcellularLocation>
</comment>
<comment type="similarity">
    <text evidence="1">Belongs to the prefoldin subunit beta family.</text>
</comment>
<organism>
    <name type="scientific">Thermococcus onnurineus (strain NA1)</name>
    <dbReference type="NCBI Taxonomy" id="523850"/>
    <lineage>
        <taxon>Archaea</taxon>
        <taxon>Methanobacteriati</taxon>
        <taxon>Methanobacteriota</taxon>
        <taxon>Thermococci</taxon>
        <taxon>Thermococcales</taxon>
        <taxon>Thermococcaceae</taxon>
        <taxon>Thermococcus</taxon>
    </lineage>
</organism>
<gene>
    <name evidence="1" type="primary">pfdB</name>
    <name type="ordered locus">TON_0451</name>
</gene>
<keyword id="KW-0143">Chaperone</keyword>
<keyword id="KW-0963">Cytoplasm</keyword>
<accession>B6YTZ4</accession>